<reference key="1">
    <citation type="journal article" date="2003" name="Nucleic Acids Res.">
        <title>The complete nucleotide sequence of the hornwort (Anthoceros formosae) chloroplast genome: insight into the earliest land plants.</title>
        <authorList>
            <person name="Kugita M."/>
            <person name="Kaneko A."/>
            <person name="Yamamoto Y."/>
            <person name="Takeya Y."/>
            <person name="Matsumoto T."/>
            <person name="Yoshinaga K."/>
        </authorList>
    </citation>
    <scope>NUCLEOTIDE SEQUENCE [LARGE SCALE GENOMIC DNA]</scope>
    <scope>RNA EDITING</scope>
</reference>
<reference key="2">
    <citation type="journal article" date="2003" name="Nucleic Acids Res.">
        <title>RNA editing in hornwort chloroplasts makes more than half the genes functional.</title>
        <authorList>
            <person name="Kugita M."/>
            <person name="Yamamoto Y."/>
            <person name="Fujikawa T."/>
            <person name="Matsumoto T."/>
            <person name="Yoshinaga K."/>
        </authorList>
    </citation>
    <scope>NUCLEOTIDE SEQUENCE [MRNA]</scope>
    <scope>RNA EDITING</scope>
    <source>
        <tissue>Thallus</tissue>
    </source>
</reference>
<reference key="3">
    <citation type="submission" date="2004-05" db="EMBL/GenBank/DDBJ databases">
        <authorList>
            <person name="Yoshinaga K."/>
        </authorList>
    </citation>
    <scope>SEQUENCE REVISION</scope>
</reference>
<organism>
    <name type="scientific">Anthoceros angustus</name>
    <name type="common">Hornwort</name>
    <name type="synonym">Anthoceros formosae</name>
    <dbReference type="NCBI Taxonomy" id="48387"/>
    <lineage>
        <taxon>Eukaryota</taxon>
        <taxon>Viridiplantae</taxon>
        <taxon>Streptophyta</taxon>
        <taxon>Embryophyta</taxon>
        <taxon>Anthocerotophyta</taxon>
        <taxon>Anthocerotopsida</taxon>
        <taxon>Anthocerotidae</taxon>
        <taxon>Anthocerotales</taxon>
        <taxon>Anthocerotaceae</taxon>
        <taxon>Anthoceros</taxon>
    </lineage>
</organism>
<evidence type="ECO:0000255" key="1"/>
<evidence type="ECO:0000269" key="2">
    <source>
    </source>
</evidence>
<evidence type="ECO:0000269" key="3">
    <source>
    </source>
</evidence>
<evidence type="ECO:0000305" key="4"/>
<feature type="chain" id="PRO_0000118010" description="NAD(P)H-quinone oxidoreductase chain 4, chloroplastic">
    <location>
        <begin position="1"/>
        <end position="501"/>
    </location>
</feature>
<feature type="transmembrane region" description="Helical" evidence="1">
    <location>
        <begin position="4"/>
        <end position="24"/>
    </location>
</feature>
<feature type="transmembrane region" description="Helical" evidence="1">
    <location>
        <begin position="37"/>
        <end position="57"/>
    </location>
</feature>
<feature type="transmembrane region" description="Helical" evidence="1">
    <location>
        <begin position="87"/>
        <end position="107"/>
    </location>
</feature>
<feature type="transmembrane region" description="Helical" evidence="1">
    <location>
        <begin position="113"/>
        <end position="130"/>
    </location>
</feature>
<feature type="transmembrane region" description="Helical" evidence="1">
    <location>
        <begin position="134"/>
        <end position="154"/>
    </location>
</feature>
<feature type="transmembrane region" description="Helical" evidence="1">
    <location>
        <begin position="167"/>
        <end position="187"/>
    </location>
</feature>
<feature type="transmembrane region" description="Helical" evidence="1">
    <location>
        <begin position="207"/>
        <end position="227"/>
    </location>
</feature>
<feature type="transmembrane region" description="Helical" evidence="1">
    <location>
        <begin position="242"/>
        <end position="262"/>
    </location>
</feature>
<feature type="transmembrane region" description="Helical" evidence="1">
    <location>
        <begin position="274"/>
        <end position="294"/>
    </location>
</feature>
<feature type="transmembrane region" description="Helical" evidence="1">
    <location>
        <begin position="310"/>
        <end position="330"/>
    </location>
</feature>
<feature type="transmembrane region" description="Helical" evidence="1">
    <location>
        <begin position="331"/>
        <end position="351"/>
    </location>
</feature>
<feature type="transmembrane region" description="Helical" evidence="1">
    <location>
        <begin position="364"/>
        <end position="384"/>
    </location>
</feature>
<feature type="transmembrane region" description="Helical" evidence="1">
    <location>
        <begin position="385"/>
        <end position="405"/>
    </location>
</feature>
<feature type="transmembrane region" description="Helical" evidence="1">
    <location>
        <begin position="416"/>
        <end position="436"/>
    </location>
</feature>
<feature type="transmembrane region" description="Helical" evidence="1">
    <location>
        <begin position="462"/>
        <end position="482"/>
    </location>
</feature>
<name>NU4C_ANTAG</name>
<gene>
    <name type="primary">ndhD</name>
</gene>
<accession>Q85BG0</accession>
<geneLocation type="chloroplast"/>
<keyword id="KW-0150">Chloroplast</keyword>
<keyword id="KW-0472">Membrane</keyword>
<keyword id="KW-0520">NAD</keyword>
<keyword id="KW-0521">NADP</keyword>
<keyword id="KW-0934">Plastid</keyword>
<keyword id="KW-0618">Plastoquinone</keyword>
<keyword id="KW-0874">Quinone</keyword>
<keyword id="KW-0691">RNA editing</keyword>
<keyword id="KW-0793">Thylakoid</keyword>
<keyword id="KW-1278">Translocase</keyword>
<keyword id="KW-0812">Transmembrane</keyword>
<keyword id="KW-1133">Transmembrane helix</keyword>
<protein>
    <recommendedName>
        <fullName>NAD(P)H-quinone oxidoreductase chain 4, chloroplastic</fullName>
        <ecNumber>7.1.1.-</ecNumber>
    </recommendedName>
    <alternativeName>
        <fullName>NAD(P)H dehydrogenase, chain 4</fullName>
    </alternativeName>
    <alternativeName>
        <fullName>NADH-plastoquinone oxidoreductase chain 4</fullName>
    </alternativeName>
</protein>
<dbReference type="EC" id="7.1.1.-"/>
<dbReference type="EMBL" id="AB086179">
    <property type="protein sequence ID" value="BAC55401.2"/>
    <property type="molecule type" value="Genomic_DNA"/>
</dbReference>
<dbReference type="EMBL" id="AB087485">
    <property type="protein sequence ID" value="BAC55501.1"/>
    <property type="status" value="ALT_SEQ"/>
    <property type="molecule type" value="mRNA"/>
</dbReference>
<dbReference type="RefSeq" id="NP_777464.1">
    <property type="nucleotide sequence ID" value="NC_004543.1"/>
</dbReference>
<dbReference type="SMR" id="Q85BG0"/>
<dbReference type="GeneID" id="2553497"/>
<dbReference type="GO" id="GO:0009535">
    <property type="term" value="C:chloroplast thylakoid membrane"/>
    <property type="evidence" value="ECO:0007669"/>
    <property type="project" value="UniProtKB-SubCell"/>
</dbReference>
<dbReference type="GO" id="GO:0008137">
    <property type="term" value="F:NADH dehydrogenase (ubiquinone) activity"/>
    <property type="evidence" value="ECO:0007669"/>
    <property type="project" value="InterPro"/>
</dbReference>
<dbReference type="GO" id="GO:0048039">
    <property type="term" value="F:ubiquinone binding"/>
    <property type="evidence" value="ECO:0007669"/>
    <property type="project" value="TreeGrafter"/>
</dbReference>
<dbReference type="GO" id="GO:0042773">
    <property type="term" value="P:ATP synthesis coupled electron transport"/>
    <property type="evidence" value="ECO:0007669"/>
    <property type="project" value="InterPro"/>
</dbReference>
<dbReference type="GO" id="GO:0015990">
    <property type="term" value="P:electron transport coupled proton transport"/>
    <property type="evidence" value="ECO:0007669"/>
    <property type="project" value="TreeGrafter"/>
</dbReference>
<dbReference type="HAMAP" id="MF_00491">
    <property type="entry name" value="NDH1_NuoM"/>
    <property type="match status" value="1"/>
</dbReference>
<dbReference type="InterPro" id="IPR022997">
    <property type="entry name" value="NADH_Q_OxRdtase_chain4"/>
</dbReference>
<dbReference type="InterPro" id="IPR010227">
    <property type="entry name" value="NADH_Q_OxRdtase_chainM/4"/>
</dbReference>
<dbReference type="InterPro" id="IPR003918">
    <property type="entry name" value="NADH_UbQ_OxRdtase"/>
</dbReference>
<dbReference type="InterPro" id="IPR001750">
    <property type="entry name" value="ND/Mrp_TM"/>
</dbReference>
<dbReference type="NCBIfam" id="TIGR01972">
    <property type="entry name" value="NDH_I_M"/>
    <property type="match status" value="1"/>
</dbReference>
<dbReference type="NCBIfam" id="NF009212">
    <property type="entry name" value="PRK12561.1"/>
    <property type="match status" value="1"/>
</dbReference>
<dbReference type="PANTHER" id="PTHR43507:SF21">
    <property type="entry name" value="NAD(P)H-QUINONE OXIDOREDUCTASE CHAIN 4, CHLOROPLASTIC"/>
    <property type="match status" value="1"/>
</dbReference>
<dbReference type="PANTHER" id="PTHR43507">
    <property type="entry name" value="NADH-UBIQUINONE OXIDOREDUCTASE CHAIN 4"/>
    <property type="match status" value="1"/>
</dbReference>
<dbReference type="Pfam" id="PF00361">
    <property type="entry name" value="Proton_antipo_M"/>
    <property type="match status" value="1"/>
</dbReference>
<dbReference type="PRINTS" id="PR01437">
    <property type="entry name" value="NUOXDRDTASE4"/>
</dbReference>
<comment type="catalytic activity">
    <reaction>
        <text>a plastoquinone + NADH + (n+1) H(+)(in) = a plastoquinol + NAD(+) + n H(+)(out)</text>
        <dbReference type="Rhea" id="RHEA:42608"/>
        <dbReference type="Rhea" id="RHEA-COMP:9561"/>
        <dbReference type="Rhea" id="RHEA-COMP:9562"/>
        <dbReference type="ChEBI" id="CHEBI:15378"/>
        <dbReference type="ChEBI" id="CHEBI:17757"/>
        <dbReference type="ChEBI" id="CHEBI:57540"/>
        <dbReference type="ChEBI" id="CHEBI:57945"/>
        <dbReference type="ChEBI" id="CHEBI:62192"/>
    </reaction>
</comment>
<comment type="catalytic activity">
    <reaction>
        <text>a plastoquinone + NADPH + (n+1) H(+)(in) = a plastoquinol + NADP(+) + n H(+)(out)</text>
        <dbReference type="Rhea" id="RHEA:42612"/>
        <dbReference type="Rhea" id="RHEA-COMP:9561"/>
        <dbReference type="Rhea" id="RHEA-COMP:9562"/>
        <dbReference type="ChEBI" id="CHEBI:15378"/>
        <dbReference type="ChEBI" id="CHEBI:17757"/>
        <dbReference type="ChEBI" id="CHEBI:57783"/>
        <dbReference type="ChEBI" id="CHEBI:58349"/>
        <dbReference type="ChEBI" id="CHEBI:62192"/>
    </reaction>
</comment>
<comment type="subcellular location">
    <subcellularLocation>
        <location evidence="4">Plastid</location>
        <location evidence="4">Chloroplast thylakoid membrane</location>
        <topology evidence="4">Multi-pass membrane protein</topology>
    </subcellularLocation>
</comment>
<comment type="RNA editing">
    <location>
        <position position="1" evidence="2 3"/>
    </location>
    <location>
        <position position="12" evidence="2 3"/>
    </location>
    <location>
        <position position="20" evidence="2 3"/>
    </location>
    <location>
        <position position="33" evidence="2 3"/>
    </location>
    <location>
        <position position="46" evidence="2 3"/>
    </location>
    <location>
        <position position="49" evidence="2 3"/>
    </location>
    <location>
        <position position="73" evidence="2 3"/>
    </location>
    <location>
        <position position="99" evidence="2 3"/>
    </location>
    <location>
        <position position="102" evidence="2 3"/>
    </location>
    <location>
        <position position="129" evidence="2 3"/>
    </location>
    <location>
        <position position="135" evidence="2 3"/>
    </location>
    <location>
        <position position="137" evidence="2 3"/>
    </location>
    <location>
        <position position="178" evidence="2 3"/>
    </location>
    <location>
        <position position="179" evidence="2 3"/>
    </location>
    <location>
        <position position="206" evidence="2 3"/>
    </location>
    <location>
        <position position="242" evidence="2 3"/>
    </location>
    <location>
        <position position="261" evidence="2 3"/>
    </location>
    <location>
        <position position="273" evidence="2 3"/>
    </location>
    <location>
        <position position="293" evidence="2 3"/>
    </location>
    <location>
        <position position="295" evidence="2 3"/>
    </location>
    <location>
        <position position="308" evidence="2 3"/>
    </location>
    <location>
        <position position="309" evidence="2 3"/>
    </location>
    <location>
        <position position="322" evidence="2 3"/>
    </location>
    <location>
        <position position="333" evidence="2 3"/>
    </location>
    <location>
        <position position="334" evidence="2 3"/>
    </location>
    <location>
        <position position="345" evidence="2 3"/>
    </location>
    <location>
        <position position="348" evidence="2 3"/>
    </location>
    <location>
        <position position="375" evidence="2 3"/>
    </location>
    <location>
        <position position="402" evidence="2 3"/>
    </location>
    <location>
        <position position="439" evidence="2 3"/>
    </location>
    <location>
        <position position="479" evidence="2 3"/>
    </location>
    <location>
        <position position="483" evidence="2 3"/>
    </location>
    <location>
        <position position="492" evidence="2 3"/>
    </location>
    <text>The initiator methionine is created by RNA editing. The nonsense codons at positions 33, 333 and 439 have been modified to sense codons.</text>
</comment>
<comment type="similarity">
    <text evidence="4">Belongs to the complex I subunit 4 family.</text>
</comment>
<proteinExistence type="evidence at transcript level"/>
<sequence length="501" mass="55853">MSNFPWLTIIVLLPISAGLLIPLLPNKGNRIIRWYTLGICLVEFLLITYIFCNYFHFDNQFIELKEDYNWINLLDFHWRLGIDGLSIGLILLTGFITTLATLAAWPITRNPRLSYFLMLAMYSGQVGLFASQDILLFFFMWELELIPVYLLLSMWGGKRRLYAATKFILYTAGSSVFLLMGALTMGLYGSDGPTLDFENLANRSYPIGLEIILYLGFFIAYAVKLPMVPLHTWLPDTHGEAHYSTCMLLAGILLKMGGYGLIRINMELLSHAHSIFAPWLVVIGAIQIVYSALTSLSQLNLKRRIAYSSVSHMGFVLIGIGSTTDIGVNGAILQMISHGLIGAALFFSAGVTYDRTRTLFLNQMGGIATSIPKIFTMFSSFSMASLALPGLSGFVAELMIFLGIVSSQNFSFLFKVVIIIVAATGIILTPIYLLSMLRQMFYGYRIIKNLTSYVTDAGPREIFIFICLFFPIIGIGFYPKLVLSLSNSKVESIISGNFSSK</sequence>